<proteinExistence type="inferred from homology"/>
<accession>A2BTC7</accession>
<keyword id="KW-0687">Ribonucleoprotein</keyword>
<keyword id="KW-0689">Ribosomal protein</keyword>
<keyword id="KW-0694">RNA-binding</keyword>
<keyword id="KW-0699">rRNA-binding</keyword>
<feature type="chain" id="PRO_1000055672" description="Large ribosomal subunit protein uL14">
    <location>
        <begin position="1"/>
        <end position="121"/>
    </location>
</feature>
<comment type="function">
    <text evidence="1">Binds to 23S rRNA. Forms part of two intersubunit bridges in the 70S ribosome.</text>
</comment>
<comment type="subunit">
    <text evidence="1">Part of the 50S ribosomal subunit. Forms a cluster with proteins L3 and L19. In the 70S ribosome, L14 and L19 interact and together make contacts with the 16S rRNA in bridges B5 and B8.</text>
</comment>
<comment type="similarity">
    <text evidence="1">Belongs to the universal ribosomal protein uL14 family.</text>
</comment>
<gene>
    <name evidence="1" type="primary">rplN</name>
    <name evidence="1" type="synonym">rpl14</name>
    <name type="ordered locus">A9601_17551</name>
</gene>
<reference key="1">
    <citation type="journal article" date="2007" name="PLoS Genet.">
        <title>Patterns and implications of gene gain and loss in the evolution of Prochlorococcus.</title>
        <authorList>
            <person name="Kettler G.C."/>
            <person name="Martiny A.C."/>
            <person name="Huang K."/>
            <person name="Zucker J."/>
            <person name="Coleman M.L."/>
            <person name="Rodrigue S."/>
            <person name="Chen F."/>
            <person name="Lapidus A."/>
            <person name="Ferriera S."/>
            <person name="Johnson J."/>
            <person name="Steglich C."/>
            <person name="Church G.M."/>
            <person name="Richardson P."/>
            <person name="Chisholm S.W."/>
        </authorList>
    </citation>
    <scope>NUCLEOTIDE SEQUENCE [LARGE SCALE GENOMIC DNA]</scope>
    <source>
        <strain>AS9601</strain>
    </source>
</reference>
<dbReference type="EMBL" id="CP000551">
    <property type="protein sequence ID" value="ABM71038.1"/>
    <property type="molecule type" value="Genomic_DNA"/>
</dbReference>
<dbReference type="RefSeq" id="WP_002807235.1">
    <property type="nucleotide sequence ID" value="NC_008816.1"/>
</dbReference>
<dbReference type="SMR" id="A2BTC7"/>
<dbReference type="STRING" id="146891.A9601_17551"/>
<dbReference type="KEGG" id="pmb:A9601_17551"/>
<dbReference type="eggNOG" id="COG0093">
    <property type="taxonomic scope" value="Bacteria"/>
</dbReference>
<dbReference type="HOGENOM" id="CLU_095071_2_1_3"/>
<dbReference type="OrthoDB" id="9806379at2"/>
<dbReference type="Proteomes" id="UP000002590">
    <property type="component" value="Chromosome"/>
</dbReference>
<dbReference type="GO" id="GO:0022625">
    <property type="term" value="C:cytosolic large ribosomal subunit"/>
    <property type="evidence" value="ECO:0007669"/>
    <property type="project" value="TreeGrafter"/>
</dbReference>
<dbReference type="GO" id="GO:0070180">
    <property type="term" value="F:large ribosomal subunit rRNA binding"/>
    <property type="evidence" value="ECO:0007669"/>
    <property type="project" value="TreeGrafter"/>
</dbReference>
<dbReference type="GO" id="GO:0003735">
    <property type="term" value="F:structural constituent of ribosome"/>
    <property type="evidence" value="ECO:0007669"/>
    <property type="project" value="InterPro"/>
</dbReference>
<dbReference type="GO" id="GO:0006412">
    <property type="term" value="P:translation"/>
    <property type="evidence" value="ECO:0007669"/>
    <property type="project" value="UniProtKB-UniRule"/>
</dbReference>
<dbReference type="CDD" id="cd00337">
    <property type="entry name" value="Ribosomal_uL14"/>
    <property type="match status" value="1"/>
</dbReference>
<dbReference type="FunFam" id="2.40.150.20:FF:000001">
    <property type="entry name" value="50S ribosomal protein L14"/>
    <property type="match status" value="1"/>
</dbReference>
<dbReference type="Gene3D" id="2.40.150.20">
    <property type="entry name" value="Ribosomal protein L14"/>
    <property type="match status" value="1"/>
</dbReference>
<dbReference type="HAMAP" id="MF_01367">
    <property type="entry name" value="Ribosomal_uL14"/>
    <property type="match status" value="1"/>
</dbReference>
<dbReference type="InterPro" id="IPR000218">
    <property type="entry name" value="Ribosomal_uL14"/>
</dbReference>
<dbReference type="InterPro" id="IPR005745">
    <property type="entry name" value="Ribosomal_uL14_bac-type"/>
</dbReference>
<dbReference type="InterPro" id="IPR036853">
    <property type="entry name" value="Ribosomal_uL14_sf"/>
</dbReference>
<dbReference type="NCBIfam" id="TIGR01067">
    <property type="entry name" value="rplN_bact"/>
    <property type="match status" value="1"/>
</dbReference>
<dbReference type="PANTHER" id="PTHR11761">
    <property type="entry name" value="50S/60S RIBOSOMAL PROTEIN L14/L23"/>
    <property type="match status" value="1"/>
</dbReference>
<dbReference type="PANTHER" id="PTHR11761:SF3">
    <property type="entry name" value="LARGE RIBOSOMAL SUBUNIT PROTEIN UL14M"/>
    <property type="match status" value="1"/>
</dbReference>
<dbReference type="Pfam" id="PF00238">
    <property type="entry name" value="Ribosomal_L14"/>
    <property type="match status" value="1"/>
</dbReference>
<dbReference type="SMART" id="SM01374">
    <property type="entry name" value="Ribosomal_L14"/>
    <property type="match status" value="1"/>
</dbReference>
<dbReference type="SUPFAM" id="SSF50193">
    <property type="entry name" value="Ribosomal protein L14"/>
    <property type="match status" value="1"/>
</dbReference>
<organism>
    <name type="scientific">Prochlorococcus marinus (strain AS9601)</name>
    <dbReference type="NCBI Taxonomy" id="146891"/>
    <lineage>
        <taxon>Bacteria</taxon>
        <taxon>Bacillati</taxon>
        <taxon>Cyanobacteriota</taxon>
        <taxon>Cyanophyceae</taxon>
        <taxon>Synechococcales</taxon>
        <taxon>Prochlorococcaceae</taxon>
        <taxon>Prochlorococcus</taxon>
    </lineage>
</organism>
<sequence length="121" mass="13377">MIQQETYLTVADNSGAKRLQCIRVLGSNRRYAHVGDVIVATVKDALPNMGVKKSEVVKAVIVRTKATLRRNTGNSIRFDDNAAVLINEDKNPKGTRVFGPVARELRDKNYTKIVSLAPEVI</sequence>
<protein>
    <recommendedName>
        <fullName evidence="1">Large ribosomal subunit protein uL14</fullName>
    </recommendedName>
    <alternativeName>
        <fullName evidence="2">50S ribosomal protein L14</fullName>
    </alternativeName>
</protein>
<evidence type="ECO:0000255" key="1">
    <source>
        <dbReference type="HAMAP-Rule" id="MF_01367"/>
    </source>
</evidence>
<evidence type="ECO:0000305" key="2"/>
<name>RL14_PROMS</name>